<reference key="1">
    <citation type="submission" date="2009-02" db="EMBL/GenBank/DDBJ databases">
        <title>Genome sequence of Bacillus cereus 03BB102.</title>
        <authorList>
            <person name="Dodson R.J."/>
            <person name="Jackson P."/>
            <person name="Munk A.C."/>
            <person name="Brettin T."/>
            <person name="Bruce D."/>
            <person name="Detter C."/>
            <person name="Tapia R."/>
            <person name="Han C."/>
            <person name="Sutton G."/>
            <person name="Sims D."/>
        </authorList>
    </citation>
    <scope>NUCLEOTIDE SEQUENCE [LARGE SCALE GENOMIC DNA]</scope>
    <source>
        <strain>03BB102</strain>
    </source>
</reference>
<proteinExistence type="inferred from homology"/>
<name>DTD_BACC3</name>
<feature type="chain" id="PRO_1000146182" description="D-aminoacyl-tRNA deacylase">
    <location>
        <begin position="1"/>
        <end position="146"/>
    </location>
</feature>
<feature type="short sequence motif" description="Gly-cisPro motif, important for rejection of L-amino acids" evidence="1">
    <location>
        <begin position="137"/>
        <end position="138"/>
    </location>
</feature>
<organism>
    <name type="scientific">Bacillus cereus (strain 03BB102)</name>
    <dbReference type="NCBI Taxonomy" id="572264"/>
    <lineage>
        <taxon>Bacteria</taxon>
        <taxon>Bacillati</taxon>
        <taxon>Bacillota</taxon>
        <taxon>Bacilli</taxon>
        <taxon>Bacillales</taxon>
        <taxon>Bacillaceae</taxon>
        <taxon>Bacillus</taxon>
        <taxon>Bacillus cereus group</taxon>
    </lineage>
</organism>
<gene>
    <name evidence="1" type="primary">dtd</name>
    <name type="ordered locus">BCA_4517</name>
</gene>
<sequence length="146" mass="16323">MRVVLQRSKEASVTVDGEIVGQIPFGLTLLVGITHEDTEKDATYIAEKIANLRIFEDESGKMNHSVLDVEGQVLSISQFTLYGDCRKGRRPNFMDAAKPDYAEHLYDFFNEEVRKQGLHVETGEFGAMMDVSLINDGPVTLIVESK</sequence>
<keyword id="KW-0963">Cytoplasm</keyword>
<keyword id="KW-0378">Hydrolase</keyword>
<keyword id="KW-0694">RNA-binding</keyword>
<keyword id="KW-0820">tRNA-binding</keyword>
<evidence type="ECO:0000255" key="1">
    <source>
        <dbReference type="HAMAP-Rule" id="MF_00518"/>
    </source>
</evidence>
<comment type="function">
    <text evidence="1">An aminoacyl-tRNA editing enzyme that deacylates mischarged D-aminoacyl-tRNAs. Also deacylates mischarged glycyl-tRNA(Ala), protecting cells against glycine mischarging by AlaRS. Acts via tRNA-based rather than protein-based catalysis; rejects L-amino acids rather than detecting D-amino acids in the active site. By recycling D-aminoacyl-tRNA to D-amino acids and free tRNA molecules, this enzyme counteracts the toxicity associated with the formation of D-aminoacyl-tRNA entities in vivo and helps enforce protein L-homochirality.</text>
</comment>
<comment type="catalytic activity">
    <reaction evidence="1">
        <text>glycyl-tRNA(Ala) + H2O = tRNA(Ala) + glycine + H(+)</text>
        <dbReference type="Rhea" id="RHEA:53744"/>
        <dbReference type="Rhea" id="RHEA-COMP:9657"/>
        <dbReference type="Rhea" id="RHEA-COMP:13640"/>
        <dbReference type="ChEBI" id="CHEBI:15377"/>
        <dbReference type="ChEBI" id="CHEBI:15378"/>
        <dbReference type="ChEBI" id="CHEBI:57305"/>
        <dbReference type="ChEBI" id="CHEBI:78442"/>
        <dbReference type="ChEBI" id="CHEBI:78522"/>
        <dbReference type="EC" id="3.1.1.96"/>
    </reaction>
</comment>
<comment type="catalytic activity">
    <reaction evidence="1">
        <text>a D-aminoacyl-tRNA + H2O = a tRNA + a D-alpha-amino acid + H(+)</text>
        <dbReference type="Rhea" id="RHEA:13953"/>
        <dbReference type="Rhea" id="RHEA-COMP:10123"/>
        <dbReference type="Rhea" id="RHEA-COMP:10124"/>
        <dbReference type="ChEBI" id="CHEBI:15377"/>
        <dbReference type="ChEBI" id="CHEBI:15378"/>
        <dbReference type="ChEBI" id="CHEBI:59871"/>
        <dbReference type="ChEBI" id="CHEBI:78442"/>
        <dbReference type="ChEBI" id="CHEBI:79333"/>
        <dbReference type="EC" id="3.1.1.96"/>
    </reaction>
</comment>
<comment type="subunit">
    <text evidence="1">Homodimer.</text>
</comment>
<comment type="subcellular location">
    <subcellularLocation>
        <location evidence="1">Cytoplasm</location>
    </subcellularLocation>
</comment>
<comment type="domain">
    <text evidence="1">A Gly-cisPro motif from one monomer fits into the active site of the other monomer to allow specific chiral rejection of L-amino acids.</text>
</comment>
<comment type="similarity">
    <text evidence="1">Belongs to the DTD family.</text>
</comment>
<protein>
    <recommendedName>
        <fullName evidence="1">D-aminoacyl-tRNA deacylase</fullName>
        <shortName evidence="1">DTD</shortName>
        <ecNumber evidence="1">3.1.1.96</ecNumber>
    </recommendedName>
    <alternativeName>
        <fullName evidence="1">Gly-tRNA(Ala) deacylase</fullName>
    </alternativeName>
</protein>
<accession>C1ESV0</accession>
<dbReference type="EC" id="3.1.1.96" evidence="1"/>
<dbReference type="EMBL" id="CP001407">
    <property type="protein sequence ID" value="ACO29278.1"/>
    <property type="molecule type" value="Genomic_DNA"/>
</dbReference>
<dbReference type="RefSeq" id="WP_001266953.1">
    <property type="nucleotide sequence ID" value="NZ_CP009318.1"/>
</dbReference>
<dbReference type="SMR" id="C1ESV0"/>
<dbReference type="KEGG" id="bcx:BCA_4517"/>
<dbReference type="PATRIC" id="fig|572264.18.peg.4466"/>
<dbReference type="Proteomes" id="UP000002210">
    <property type="component" value="Chromosome"/>
</dbReference>
<dbReference type="GO" id="GO:0005737">
    <property type="term" value="C:cytoplasm"/>
    <property type="evidence" value="ECO:0007669"/>
    <property type="project" value="UniProtKB-SubCell"/>
</dbReference>
<dbReference type="GO" id="GO:0051500">
    <property type="term" value="F:D-tyrosyl-tRNA(Tyr) deacylase activity"/>
    <property type="evidence" value="ECO:0007669"/>
    <property type="project" value="TreeGrafter"/>
</dbReference>
<dbReference type="GO" id="GO:0106026">
    <property type="term" value="F:Gly-tRNA(Ala) deacylase activity"/>
    <property type="evidence" value="ECO:0007669"/>
    <property type="project" value="UniProtKB-UniRule"/>
</dbReference>
<dbReference type="GO" id="GO:0043908">
    <property type="term" value="F:Ser(Gly)-tRNA(Ala) hydrolase activity"/>
    <property type="evidence" value="ECO:0007669"/>
    <property type="project" value="UniProtKB-UniRule"/>
</dbReference>
<dbReference type="GO" id="GO:0000049">
    <property type="term" value="F:tRNA binding"/>
    <property type="evidence" value="ECO:0007669"/>
    <property type="project" value="UniProtKB-UniRule"/>
</dbReference>
<dbReference type="GO" id="GO:0019478">
    <property type="term" value="P:D-amino acid catabolic process"/>
    <property type="evidence" value="ECO:0007669"/>
    <property type="project" value="UniProtKB-UniRule"/>
</dbReference>
<dbReference type="CDD" id="cd00563">
    <property type="entry name" value="Dtyr_deacylase"/>
    <property type="match status" value="1"/>
</dbReference>
<dbReference type="FunFam" id="3.50.80.10:FF:000001">
    <property type="entry name" value="D-aminoacyl-tRNA deacylase"/>
    <property type="match status" value="1"/>
</dbReference>
<dbReference type="Gene3D" id="3.50.80.10">
    <property type="entry name" value="D-tyrosyl-tRNA(Tyr) deacylase"/>
    <property type="match status" value="1"/>
</dbReference>
<dbReference type="HAMAP" id="MF_00518">
    <property type="entry name" value="Deacylase_Dtd"/>
    <property type="match status" value="1"/>
</dbReference>
<dbReference type="InterPro" id="IPR003732">
    <property type="entry name" value="Daa-tRNA_deacyls_DTD"/>
</dbReference>
<dbReference type="InterPro" id="IPR023509">
    <property type="entry name" value="DTD-like_sf"/>
</dbReference>
<dbReference type="NCBIfam" id="TIGR00256">
    <property type="entry name" value="D-aminoacyl-tRNA deacylase"/>
    <property type="match status" value="1"/>
</dbReference>
<dbReference type="PANTHER" id="PTHR10472:SF5">
    <property type="entry name" value="D-AMINOACYL-TRNA DEACYLASE 1"/>
    <property type="match status" value="1"/>
</dbReference>
<dbReference type="PANTHER" id="PTHR10472">
    <property type="entry name" value="D-TYROSYL-TRNA TYR DEACYLASE"/>
    <property type="match status" value="1"/>
</dbReference>
<dbReference type="Pfam" id="PF02580">
    <property type="entry name" value="Tyr_Deacylase"/>
    <property type="match status" value="1"/>
</dbReference>
<dbReference type="SUPFAM" id="SSF69500">
    <property type="entry name" value="DTD-like"/>
    <property type="match status" value="1"/>
</dbReference>